<reference key="1">
    <citation type="journal article" date="2008" name="J. Bacteriol.">
        <title>Complete genome sequence of uropathogenic Proteus mirabilis, a master of both adherence and motility.</title>
        <authorList>
            <person name="Pearson M.M."/>
            <person name="Sebaihia M."/>
            <person name="Churcher C."/>
            <person name="Quail M.A."/>
            <person name="Seshasayee A.S."/>
            <person name="Luscombe N.M."/>
            <person name="Abdellah Z."/>
            <person name="Arrosmith C."/>
            <person name="Atkin B."/>
            <person name="Chillingworth T."/>
            <person name="Hauser H."/>
            <person name="Jagels K."/>
            <person name="Moule S."/>
            <person name="Mungall K."/>
            <person name="Norbertczak H."/>
            <person name="Rabbinowitsch E."/>
            <person name="Walker D."/>
            <person name="Whithead S."/>
            <person name="Thomson N.R."/>
            <person name="Rather P.N."/>
            <person name="Parkhill J."/>
            <person name="Mobley H.L.T."/>
        </authorList>
    </citation>
    <scope>NUCLEOTIDE SEQUENCE [LARGE SCALE GENOMIC DNA]</scope>
    <source>
        <strain>HI4320</strain>
    </source>
</reference>
<name>FMT_PROMH</name>
<proteinExistence type="inferred from homology"/>
<comment type="function">
    <text evidence="1">Attaches a formyl group to the free amino group of methionyl-tRNA(fMet). The formyl group appears to play a dual role in the initiator identity of N-formylmethionyl-tRNA by promoting its recognition by IF2 and preventing the misappropriation of this tRNA by the elongation apparatus.</text>
</comment>
<comment type="catalytic activity">
    <reaction evidence="1">
        <text>L-methionyl-tRNA(fMet) + (6R)-10-formyltetrahydrofolate = N-formyl-L-methionyl-tRNA(fMet) + (6S)-5,6,7,8-tetrahydrofolate + H(+)</text>
        <dbReference type="Rhea" id="RHEA:24380"/>
        <dbReference type="Rhea" id="RHEA-COMP:9952"/>
        <dbReference type="Rhea" id="RHEA-COMP:9953"/>
        <dbReference type="ChEBI" id="CHEBI:15378"/>
        <dbReference type="ChEBI" id="CHEBI:57453"/>
        <dbReference type="ChEBI" id="CHEBI:78530"/>
        <dbReference type="ChEBI" id="CHEBI:78844"/>
        <dbReference type="ChEBI" id="CHEBI:195366"/>
        <dbReference type="EC" id="2.1.2.9"/>
    </reaction>
</comment>
<comment type="similarity">
    <text evidence="1">Belongs to the Fmt family.</text>
</comment>
<organism>
    <name type="scientific">Proteus mirabilis (strain HI4320)</name>
    <dbReference type="NCBI Taxonomy" id="529507"/>
    <lineage>
        <taxon>Bacteria</taxon>
        <taxon>Pseudomonadati</taxon>
        <taxon>Pseudomonadota</taxon>
        <taxon>Gammaproteobacteria</taxon>
        <taxon>Enterobacterales</taxon>
        <taxon>Morganellaceae</taxon>
        <taxon>Proteus</taxon>
    </lineage>
</organism>
<evidence type="ECO:0000255" key="1">
    <source>
        <dbReference type="HAMAP-Rule" id="MF_00182"/>
    </source>
</evidence>
<gene>
    <name evidence="1" type="primary">fmt</name>
    <name type="ordered locus">PMI3287</name>
</gene>
<sequence length="316" mass="34685">MSDSLRIIFAGTPDFAARHLAALLSTQHHIVGVLTPPDKPAGRGKKLTINPVKELALTNNIPVYQPTSLKPEENHEWIKALQPDVMIVVAYGMILPKAVLDIPRLGCLNVHGSLLPKWRGAAPIQRALWAGDTETGVTIMQMDVGLDTGDMLYKASCPITHQDTSASLYAKLAELGPKALINTLDLIISGELKAEKQDDSLANYAEKLSKEEAKINWSLSAQQIERCIRAFNPWPMSFFMLDDQPVKVWEAQVIASDNTNQIPGTLLKADKTGIYIVTGEGILNITKLQPSGKKPMASADFLNSKRDWFTPGKIIQ</sequence>
<protein>
    <recommendedName>
        <fullName evidence="1">Methionyl-tRNA formyltransferase</fullName>
        <ecNumber evidence="1">2.1.2.9</ecNumber>
    </recommendedName>
</protein>
<feature type="chain" id="PRO_1000098429" description="Methionyl-tRNA formyltransferase">
    <location>
        <begin position="1"/>
        <end position="316"/>
    </location>
</feature>
<feature type="binding site" evidence="1">
    <location>
        <begin position="113"/>
        <end position="116"/>
    </location>
    <ligand>
        <name>(6S)-5,6,7,8-tetrahydrofolate</name>
        <dbReference type="ChEBI" id="CHEBI:57453"/>
    </ligand>
</feature>
<accession>B4F1L6</accession>
<keyword id="KW-0648">Protein biosynthesis</keyword>
<keyword id="KW-1185">Reference proteome</keyword>
<keyword id="KW-0808">Transferase</keyword>
<dbReference type="EC" id="2.1.2.9" evidence="1"/>
<dbReference type="EMBL" id="AM942759">
    <property type="protein sequence ID" value="CAR46443.1"/>
    <property type="molecule type" value="Genomic_DNA"/>
</dbReference>
<dbReference type="RefSeq" id="WP_004246934.1">
    <property type="nucleotide sequence ID" value="NC_010554.1"/>
</dbReference>
<dbReference type="SMR" id="B4F1L6"/>
<dbReference type="EnsemblBacteria" id="CAR46443">
    <property type="protein sequence ID" value="CAR46443"/>
    <property type="gene ID" value="PMI3287"/>
</dbReference>
<dbReference type="GeneID" id="6800050"/>
<dbReference type="KEGG" id="pmr:PMI3287"/>
<dbReference type="eggNOG" id="COG0223">
    <property type="taxonomic scope" value="Bacteria"/>
</dbReference>
<dbReference type="HOGENOM" id="CLU_033347_1_2_6"/>
<dbReference type="Proteomes" id="UP000008319">
    <property type="component" value="Chromosome"/>
</dbReference>
<dbReference type="GO" id="GO:0005829">
    <property type="term" value="C:cytosol"/>
    <property type="evidence" value="ECO:0007669"/>
    <property type="project" value="TreeGrafter"/>
</dbReference>
<dbReference type="GO" id="GO:0004479">
    <property type="term" value="F:methionyl-tRNA formyltransferase activity"/>
    <property type="evidence" value="ECO:0007669"/>
    <property type="project" value="UniProtKB-UniRule"/>
</dbReference>
<dbReference type="CDD" id="cd08646">
    <property type="entry name" value="FMT_core_Met-tRNA-FMT_N"/>
    <property type="match status" value="1"/>
</dbReference>
<dbReference type="CDD" id="cd08704">
    <property type="entry name" value="Met_tRNA_FMT_C"/>
    <property type="match status" value="1"/>
</dbReference>
<dbReference type="FunFam" id="3.40.50.170:FF:000003">
    <property type="entry name" value="Methionyl-tRNA formyltransferase"/>
    <property type="match status" value="1"/>
</dbReference>
<dbReference type="Gene3D" id="3.10.25.10">
    <property type="entry name" value="Formyl transferase, C-terminal domain"/>
    <property type="match status" value="1"/>
</dbReference>
<dbReference type="Gene3D" id="3.40.50.170">
    <property type="entry name" value="Formyl transferase, N-terminal domain"/>
    <property type="match status" value="1"/>
</dbReference>
<dbReference type="HAMAP" id="MF_00182">
    <property type="entry name" value="Formyl_trans"/>
    <property type="match status" value="1"/>
</dbReference>
<dbReference type="InterPro" id="IPR005794">
    <property type="entry name" value="Fmt"/>
</dbReference>
<dbReference type="InterPro" id="IPR005793">
    <property type="entry name" value="Formyl_trans_C"/>
</dbReference>
<dbReference type="InterPro" id="IPR037022">
    <property type="entry name" value="Formyl_trans_C_sf"/>
</dbReference>
<dbReference type="InterPro" id="IPR002376">
    <property type="entry name" value="Formyl_transf_N"/>
</dbReference>
<dbReference type="InterPro" id="IPR036477">
    <property type="entry name" value="Formyl_transf_N_sf"/>
</dbReference>
<dbReference type="InterPro" id="IPR011034">
    <property type="entry name" value="Formyl_transferase-like_C_sf"/>
</dbReference>
<dbReference type="InterPro" id="IPR001555">
    <property type="entry name" value="GART_AS"/>
</dbReference>
<dbReference type="InterPro" id="IPR044135">
    <property type="entry name" value="Met-tRNA-FMT_C"/>
</dbReference>
<dbReference type="InterPro" id="IPR041711">
    <property type="entry name" value="Met-tRNA-FMT_N"/>
</dbReference>
<dbReference type="NCBIfam" id="TIGR00460">
    <property type="entry name" value="fmt"/>
    <property type="match status" value="1"/>
</dbReference>
<dbReference type="PANTHER" id="PTHR11138">
    <property type="entry name" value="METHIONYL-TRNA FORMYLTRANSFERASE"/>
    <property type="match status" value="1"/>
</dbReference>
<dbReference type="PANTHER" id="PTHR11138:SF5">
    <property type="entry name" value="METHIONYL-TRNA FORMYLTRANSFERASE, MITOCHONDRIAL"/>
    <property type="match status" value="1"/>
</dbReference>
<dbReference type="Pfam" id="PF02911">
    <property type="entry name" value="Formyl_trans_C"/>
    <property type="match status" value="1"/>
</dbReference>
<dbReference type="Pfam" id="PF00551">
    <property type="entry name" value="Formyl_trans_N"/>
    <property type="match status" value="1"/>
</dbReference>
<dbReference type="SUPFAM" id="SSF50486">
    <property type="entry name" value="FMT C-terminal domain-like"/>
    <property type="match status" value="1"/>
</dbReference>
<dbReference type="SUPFAM" id="SSF53328">
    <property type="entry name" value="Formyltransferase"/>
    <property type="match status" value="1"/>
</dbReference>
<dbReference type="PROSITE" id="PS00373">
    <property type="entry name" value="GART"/>
    <property type="match status" value="1"/>
</dbReference>